<sequence>MATVSTGSLIFIVKKNSPMMSKLVFFWQNREKEFRDFGGFSEKSVYFCDTIDNRKRLILVVINREVLLMTFDAIDQLAVNTVRTLSMDAIQAANSGHPGLPMGAAPMAYVLWNHFMNINPKTSRNWSNRDRFILSAGHGSAMLYSLLHLAGYDLSVEDLKNFRQWGSKTPGHPEVNHTDGVEATTGPLGQGIANAVGMAMAEAHLAAKFNKPGFDIVDHYTFALNGDGDLMEGVSQEAASMAGHLKLGKLVLLYDSNDISLDGPTSMAFTEDVKGRFEAYGWQHILVKDGNDLEEIAAAIEAAKAETEKPTIIEVKTIIGFGAEKQGTSAVHGAPLGAEGIAFAKKAYQWTHQDFEVPAEVTERFAQGLQARGEKAEQAWNDLFAAYQAEYPELAAEYQKAFANEAAQVELEAHELGSSMASRVSSQQAIQQISEQVASFWGGSADLSASNNTMVKAETDFQPGHYEGRNIWFGVREFAMAAAMNGIALHGGTRVYGGTFFVFSNYLLPAVRMAALQNLPTVYVMTHDSIAVGEDGPTHEPIEQLASVRSMPNLNVIRPADGNETNAAWKRAIAETDRPTMLVLTRQNLPVLEGTKELAEDGLNKGAYILSEAKGDLDGIIIATGSEVKLAMDTQEALEAEGIHVRVVSMPSQNIFDEQSAEYKESILPAAVTKRLAIEAGSSFGWAKYVGLAGKTLTIDTWGASAPGNRIFEEYGFTVANATELYKSL</sequence>
<gene>
    <name type="primary">tkt</name>
    <name type="ordered locus">spyM18_1687</name>
</gene>
<keyword id="KW-0106">Calcium</keyword>
<keyword id="KW-0460">Magnesium</keyword>
<keyword id="KW-0479">Metal-binding</keyword>
<keyword id="KW-0786">Thiamine pyrophosphate</keyword>
<keyword id="KW-0808">Transferase</keyword>
<evidence type="ECO:0000250" key="1"/>
<evidence type="ECO:0000305" key="2"/>
<proteinExistence type="inferred from homology"/>
<comment type="function">
    <text evidence="1">Catalyzes the transfer of a two-carbon ketol group from a ketose donor to an aldose acceptor, via a covalent intermediate with the cofactor thiamine pyrophosphate.</text>
</comment>
<comment type="catalytic activity">
    <reaction>
        <text>D-sedoheptulose 7-phosphate + D-glyceraldehyde 3-phosphate = aldehydo-D-ribose 5-phosphate + D-xylulose 5-phosphate</text>
        <dbReference type="Rhea" id="RHEA:10508"/>
        <dbReference type="ChEBI" id="CHEBI:57483"/>
        <dbReference type="ChEBI" id="CHEBI:57737"/>
        <dbReference type="ChEBI" id="CHEBI:58273"/>
        <dbReference type="ChEBI" id="CHEBI:59776"/>
        <dbReference type="EC" id="2.2.1.1"/>
    </reaction>
</comment>
<comment type="cofactor">
    <cofactor evidence="1">
        <name>Mg(2+)</name>
        <dbReference type="ChEBI" id="CHEBI:18420"/>
    </cofactor>
    <cofactor evidence="1">
        <name>Ca(2+)</name>
        <dbReference type="ChEBI" id="CHEBI:29108"/>
    </cofactor>
    <cofactor evidence="1">
        <name>Mn(2+)</name>
        <dbReference type="ChEBI" id="CHEBI:29035"/>
    </cofactor>
    <cofactor evidence="1">
        <name>Co(2+)</name>
        <dbReference type="ChEBI" id="CHEBI:48828"/>
    </cofactor>
    <text evidence="1">Binds 1 Mg(2+) ion per subunit. Can also utilize other divalent metal cations, such as Ca(2+), Mn(2+) and Co(2+).</text>
</comment>
<comment type="cofactor">
    <cofactor evidence="1">
        <name>thiamine diphosphate</name>
        <dbReference type="ChEBI" id="CHEBI:58937"/>
    </cofactor>
    <text evidence="1">Binds 1 thiamine pyrophosphate per subunit.</text>
</comment>
<comment type="subunit">
    <text evidence="1">Homodimer.</text>
</comment>
<comment type="similarity">
    <text evidence="2">Belongs to the transketolase family.</text>
</comment>
<protein>
    <recommendedName>
        <fullName>Transketolase</fullName>
        <shortName>TK</shortName>
        <ecNumber>2.2.1.1</ecNumber>
    </recommendedName>
</protein>
<feature type="chain" id="PRO_0000287916" description="Transketolase">
    <location>
        <begin position="1"/>
        <end position="729"/>
    </location>
</feature>
<feature type="active site" description="Proton donor" evidence="1">
    <location>
        <position position="477"/>
    </location>
</feature>
<feature type="binding site" evidence="1">
    <location>
        <position position="97"/>
    </location>
    <ligand>
        <name>substrate</name>
    </ligand>
</feature>
<feature type="binding site" evidence="1">
    <location>
        <position position="138"/>
    </location>
    <ligand>
        <name>thiamine diphosphate</name>
        <dbReference type="ChEBI" id="CHEBI:58937"/>
    </ligand>
</feature>
<feature type="binding site" evidence="1">
    <location>
        <begin position="186"/>
        <end position="188"/>
    </location>
    <ligand>
        <name>thiamine diphosphate</name>
        <dbReference type="ChEBI" id="CHEBI:58937"/>
    </ligand>
</feature>
<feature type="binding site" evidence="1">
    <location>
        <position position="227"/>
    </location>
    <ligand>
        <name>Mg(2+)</name>
        <dbReference type="ChEBI" id="CHEBI:18420"/>
    </ligand>
</feature>
<feature type="binding site" evidence="1">
    <location>
        <position position="228"/>
    </location>
    <ligand>
        <name>thiamine diphosphate</name>
        <dbReference type="ChEBI" id="CHEBI:58937"/>
    </ligand>
</feature>
<feature type="binding site" evidence="1">
    <location>
        <position position="257"/>
    </location>
    <ligand>
        <name>Mg(2+)</name>
        <dbReference type="ChEBI" id="CHEBI:18420"/>
    </ligand>
</feature>
<feature type="binding site" evidence="1">
    <location>
        <position position="257"/>
    </location>
    <ligand>
        <name>thiamine diphosphate</name>
        <dbReference type="ChEBI" id="CHEBI:58937"/>
    </ligand>
</feature>
<feature type="binding site" evidence="1">
    <location>
        <position position="259"/>
    </location>
    <ligand>
        <name>Mg(2+)</name>
        <dbReference type="ChEBI" id="CHEBI:18420"/>
    </ligand>
</feature>
<feature type="binding site" evidence="1">
    <location>
        <position position="332"/>
    </location>
    <ligand>
        <name>substrate</name>
    </ligand>
</feature>
<feature type="binding site" evidence="1">
    <location>
        <position position="332"/>
    </location>
    <ligand>
        <name>thiamine diphosphate</name>
        <dbReference type="ChEBI" id="CHEBI:58937"/>
    </ligand>
</feature>
<feature type="binding site" evidence="1">
    <location>
        <position position="423"/>
    </location>
    <ligand>
        <name>substrate</name>
    </ligand>
</feature>
<feature type="binding site" evidence="1">
    <location>
        <position position="450"/>
    </location>
    <ligand>
        <name>substrate</name>
    </ligand>
</feature>
<feature type="binding site" evidence="1">
    <location>
        <position position="503"/>
    </location>
    <ligand>
        <name>thiamine diphosphate</name>
        <dbReference type="ChEBI" id="CHEBI:58937"/>
    </ligand>
</feature>
<feature type="binding site" evidence="1">
    <location>
        <position position="527"/>
    </location>
    <ligand>
        <name>substrate</name>
    </ligand>
</feature>
<feature type="binding site" evidence="1">
    <location>
        <position position="535"/>
    </location>
    <ligand>
        <name>substrate</name>
    </ligand>
</feature>
<feature type="binding site" evidence="1">
    <location>
        <position position="586"/>
    </location>
    <ligand>
        <name>substrate</name>
    </ligand>
</feature>
<feature type="site" description="Important for catalytic activity" evidence="1">
    <location>
        <position position="97"/>
    </location>
</feature>
<feature type="site" description="Important for catalytic activity" evidence="1">
    <location>
        <position position="332"/>
    </location>
</feature>
<organism>
    <name type="scientific">Streptococcus pyogenes serotype M18 (strain MGAS8232)</name>
    <dbReference type="NCBI Taxonomy" id="186103"/>
    <lineage>
        <taxon>Bacteria</taxon>
        <taxon>Bacillati</taxon>
        <taxon>Bacillota</taxon>
        <taxon>Bacilli</taxon>
        <taxon>Lactobacillales</taxon>
        <taxon>Streptococcaceae</taxon>
        <taxon>Streptococcus</taxon>
    </lineage>
</organism>
<accession>Q8NZX4</accession>
<name>TKT_STRP8</name>
<reference key="1">
    <citation type="journal article" date="2002" name="Proc. Natl. Acad. Sci. U.S.A.">
        <title>Genome sequence and comparative microarray analysis of serotype M18 group A Streptococcus strains associated with acute rheumatic fever outbreaks.</title>
        <authorList>
            <person name="Smoot J.C."/>
            <person name="Barbian K.D."/>
            <person name="Van Gompel J.J."/>
            <person name="Smoot L.M."/>
            <person name="Chaussee M.S."/>
            <person name="Sylva G.L."/>
            <person name="Sturdevant D.E."/>
            <person name="Ricklefs S.M."/>
            <person name="Porcella S.F."/>
            <person name="Parkins L.D."/>
            <person name="Beres S.B."/>
            <person name="Campbell D.S."/>
            <person name="Smith T.M."/>
            <person name="Zhang Q."/>
            <person name="Kapur V."/>
            <person name="Daly J.A."/>
            <person name="Veasy L.G."/>
            <person name="Musser J.M."/>
        </authorList>
    </citation>
    <scope>NUCLEOTIDE SEQUENCE [LARGE SCALE GENOMIC DNA]</scope>
    <source>
        <strain>MGAS8232</strain>
    </source>
</reference>
<dbReference type="EC" id="2.2.1.1"/>
<dbReference type="EMBL" id="AE009949">
    <property type="protein sequence ID" value="AAL98225.1"/>
    <property type="molecule type" value="Genomic_DNA"/>
</dbReference>
<dbReference type="SMR" id="Q8NZX4"/>
<dbReference type="KEGG" id="spm:spyM18_1687"/>
<dbReference type="HOGENOM" id="CLU_009227_0_0_9"/>
<dbReference type="GO" id="GO:0005829">
    <property type="term" value="C:cytosol"/>
    <property type="evidence" value="ECO:0007669"/>
    <property type="project" value="TreeGrafter"/>
</dbReference>
<dbReference type="GO" id="GO:0046872">
    <property type="term" value="F:metal ion binding"/>
    <property type="evidence" value="ECO:0007669"/>
    <property type="project" value="UniProtKB-KW"/>
</dbReference>
<dbReference type="GO" id="GO:0004802">
    <property type="term" value="F:transketolase activity"/>
    <property type="evidence" value="ECO:0007669"/>
    <property type="project" value="UniProtKB-EC"/>
</dbReference>
<dbReference type="GO" id="GO:0006098">
    <property type="term" value="P:pentose-phosphate shunt"/>
    <property type="evidence" value="ECO:0007669"/>
    <property type="project" value="TreeGrafter"/>
</dbReference>
<dbReference type="CDD" id="cd07033">
    <property type="entry name" value="TPP_PYR_DXS_TK_like"/>
    <property type="match status" value="1"/>
</dbReference>
<dbReference type="CDD" id="cd02012">
    <property type="entry name" value="TPP_TK"/>
    <property type="match status" value="1"/>
</dbReference>
<dbReference type="FunFam" id="3.40.50.920:FF:000003">
    <property type="entry name" value="Transketolase"/>
    <property type="match status" value="1"/>
</dbReference>
<dbReference type="FunFam" id="3.40.50.970:FF:000003">
    <property type="entry name" value="Transketolase"/>
    <property type="match status" value="1"/>
</dbReference>
<dbReference type="FunFam" id="3.40.50.970:FF:000004">
    <property type="entry name" value="Transketolase"/>
    <property type="match status" value="1"/>
</dbReference>
<dbReference type="Gene3D" id="3.40.50.920">
    <property type="match status" value="1"/>
</dbReference>
<dbReference type="Gene3D" id="3.40.50.970">
    <property type="match status" value="2"/>
</dbReference>
<dbReference type="InterPro" id="IPR029061">
    <property type="entry name" value="THDP-binding"/>
</dbReference>
<dbReference type="InterPro" id="IPR009014">
    <property type="entry name" value="Transketo_C/PFOR_II"/>
</dbReference>
<dbReference type="InterPro" id="IPR055152">
    <property type="entry name" value="Transketolase-like_C_2"/>
</dbReference>
<dbReference type="InterPro" id="IPR005475">
    <property type="entry name" value="Transketolase-like_Pyr-bd"/>
</dbReference>
<dbReference type="InterPro" id="IPR005478">
    <property type="entry name" value="Transketolase_bac-like"/>
</dbReference>
<dbReference type="InterPro" id="IPR020826">
    <property type="entry name" value="Transketolase_BS"/>
</dbReference>
<dbReference type="InterPro" id="IPR049557">
    <property type="entry name" value="Transketolase_CS"/>
</dbReference>
<dbReference type="InterPro" id="IPR033247">
    <property type="entry name" value="Transketolase_fam"/>
</dbReference>
<dbReference type="InterPro" id="IPR005474">
    <property type="entry name" value="Transketolase_N"/>
</dbReference>
<dbReference type="NCBIfam" id="TIGR00232">
    <property type="entry name" value="tktlase_bact"/>
    <property type="match status" value="1"/>
</dbReference>
<dbReference type="PANTHER" id="PTHR43522">
    <property type="entry name" value="TRANSKETOLASE"/>
    <property type="match status" value="1"/>
</dbReference>
<dbReference type="PANTHER" id="PTHR43522:SF2">
    <property type="entry name" value="TRANSKETOLASE 1-RELATED"/>
    <property type="match status" value="1"/>
</dbReference>
<dbReference type="Pfam" id="PF02779">
    <property type="entry name" value="Transket_pyr"/>
    <property type="match status" value="1"/>
</dbReference>
<dbReference type="Pfam" id="PF22613">
    <property type="entry name" value="Transketolase_C_1"/>
    <property type="match status" value="1"/>
</dbReference>
<dbReference type="Pfam" id="PF00456">
    <property type="entry name" value="Transketolase_N"/>
    <property type="match status" value="1"/>
</dbReference>
<dbReference type="SMART" id="SM00861">
    <property type="entry name" value="Transket_pyr"/>
    <property type="match status" value="1"/>
</dbReference>
<dbReference type="SUPFAM" id="SSF52518">
    <property type="entry name" value="Thiamin diphosphate-binding fold (THDP-binding)"/>
    <property type="match status" value="2"/>
</dbReference>
<dbReference type="SUPFAM" id="SSF52922">
    <property type="entry name" value="TK C-terminal domain-like"/>
    <property type="match status" value="1"/>
</dbReference>
<dbReference type="PROSITE" id="PS00801">
    <property type="entry name" value="TRANSKETOLASE_1"/>
    <property type="match status" value="1"/>
</dbReference>
<dbReference type="PROSITE" id="PS00802">
    <property type="entry name" value="TRANSKETOLASE_2"/>
    <property type="match status" value="1"/>
</dbReference>